<keyword id="KW-1185">Reference proteome</keyword>
<name>Y3086_DESHY</name>
<proteinExistence type="inferred from homology"/>
<evidence type="ECO:0000305" key="1"/>
<sequence length="101" mass="11555">MKLAIIGGYNFERHSKSMGKLKNIELRFHDGVPKKNNKKVLENLIKDTDCVIIVQMVCSHSSMWDAKDVARKYNKKIYYSQAKGLASVLTMIEKEHGIRTA</sequence>
<dbReference type="EMBL" id="AP008230">
    <property type="protein sequence ID" value="BAE84875.1"/>
    <property type="molecule type" value="Genomic_DNA"/>
</dbReference>
<dbReference type="RefSeq" id="WP_011460840.1">
    <property type="nucleotide sequence ID" value="NC_007907.1"/>
</dbReference>
<dbReference type="SMR" id="Q24SW7"/>
<dbReference type="STRING" id="138119.DSY3086"/>
<dbReference type="KEGG" id="dsy:DSY3086"/>
<dbReference type="HOGENOM" id="CLU_2286918_0_0_9"/>
<dbReference type="Proteomes" id="UP000001946">
    <property type="component" value="Chromosome"/>
</dbReference>
<dbReference type="InterPro" id="IPR016772">
    <property type="entry name" value="UCP020408"/>
</dbReference>
<dbReference type="Pfam" id="PF10087">
    <property type="entry name" value="DUF2325"/>
    <property type="match status" value="1"/>
</dbReference>
<feature type="chain" id="PRO_0000383584" description="UPF0751 protein DSY3086">
    <location>
        <begin position="1"/>
        <end position="101"/>
    </location>
</feature>
<organism>
    <name type="scientific">Desulfitobacterium hafniense (strain Y51)</name>
    <dbReference type="NCBI Taxonomy" id="138119"/>
    <lineage>
        <taxon>Bacteria</taxon>
        <taxon>Bacillati</taxon>
        <taxon>Bacillota</taxon>
        <taxon>Clostridia</taxon>
        <taxon>Eubacteriales</taxon>
        <taxon>Desulfitobacteriaceae</taxon>
        <taxon>Desulfitobacterium</taxon>
    </lineage>
</organism>
<accession>Q24SW7</accession>
<gene>
    <name type="ordered locus">DSY3086</name>
</gene>
<reference key="1">
    <citation type="journal article" date="2006" name="J. Bacteriol.">
        <title>Complete genome sequence of the dehalorespiring bacterium Desulfitobacterium hafniense Y51 and comparison with Dehalococcoides ethenogenes 195.</title>
        <authorList>
            <person name="Nonaka H."/>
            <person name="Keresztes G."/>
            <person name="Shinoda Y."/>
            <person name="Ikenaga Y."/>
            <person name="Abe M."/>
            <person name="Naito K."/>
            <person name="Inatomi K."/>
            <person name="Furukawa K."/>
            <person name="Inui M."/>
            <person name="Yukawa H."/>
        </authorList>
    </citation>
    <scope>NUCLEOTIDE SEQUENCE [LARGE SCALE GENOMIC DNA]</scope>
    <source>
        <strain>Y51</strain>
    </source>
</reference>
<comment type="similarity">
    <text evidence="1">Belongs to the UPF0751 family.</text>
</comment>
<protein>
    <recommendedName>
        <fullName>UPF0751 protein DSY3086</fullName>
    </recommendedName>
</protein>